<proteinExistence type="inferred from homology"/>
<name>YEGP_YERPE</name>
<evidence type="ECO:0000305" key="1"/>
<dbReference type="EMBL" id="AL590842">
    <property type="protein sequence ID" value="CAL21465.1"/>
    <property type="molecule type" value="Genomic_DNA"/>
</dbReference>
<dbReference type="EMBL" id="AE009952">
    <property type="protein sequence ID" value="AAM84953.1"/>
    <property type="status" value="ALT_INIT"/>
    <property type="molecule type" value="Genomic_DNA"/>
</dbReference>
<dbReference type="EMBL" id="AE017042">
    <property type="protein sequence ID" value="AAS62909.1"/>
    <property type="status" value="ALT_INIT"/>
    <property type="molecule type" value="Genomic_DNA"/>
</dbReference>
<dbReference type="PIR" id="AF0347">
    <property type="entry name" value="AF0347"/>
</dbReference>
<dbReference type="RefSeq" id="WP_002209797.1">
    <property type="nucleotide sequence ID" value="NZ_WUCM01000037.1"/>
</dbReference>
<dbReference type="RefSeq" id="YP_002347790.1">
    <property type="nucleotide sequence ID" value="NC_003143.1"/>
</dbReference>
<dbReference type="SMR" id="Q8ZCV6"/>
<dbReference type="STRING" id="214092.YPO2854"/>
<dbReference type="PaxDb" id="214092-YPO2854"/>
<dbReference type="DNASU" id="1146327"/>
<dbReference type="EnsemblBacteria" id="AAS62909">
    <property type="protein sequence ID" value="AAS62909"/>
    <property type="gene ID" value="YP_2720"/>
</dbReference>
<dbReference type="KEGG" id="ype:YPO2854"/>
<dbReference type="KEGG" id="ypk:y1380"/>
<dbReference type="KEGG" id="ypm:YP_2720"/>
<dbReference type="PATRIC" id="fig|214092.21.peg.3298"/>
<dbReference type="eggNOG" id="COG3422">
    <property type="taxonomic scope" value="Bacteria"/>
</dbReference>
<dbReference type="HOGENOM" id="CLU_163886_0_0_6"/>
<dbReference type="OMA" id="AANHQVI"/>
<dbReference type="OrthoDB" id="9802792at2"/>
<dbReference type="Proteomes" id="UP000000815">
    <property type="component" value="Chromosome"/>
</dbReference>
<dbReference type="Proteomes" id="UP000001019">
    <property type="component" value="Chromosome"/>
</dbReference>
<dbReference type="Proteomes" id="UP000002490">
    <property type="component" value="Chromosome"/>
</dbReference>
<dbReference type="Gene3D" id="2.30.29.80">
    <property type="match status" value="1"/>
</dbReference>
<dbReference type="InterPro" id="IPR010879">
    <property type="entry name" value="DUF1508"/>
</dbReference>
<dbReference type="InterPro" id="IPR051141">
    <property type="entry name" value="UPF0339_domain"/>
</dbReference>
<dbReference type="InterPro" id="IPR036913">
    <property type="entry name" value="YegP-like_sf"/>
</dbReference>
<dbReference type="PANTHER" id="PTHR40606">
    <property type="match status" value="1"/>
</dbReference>
<dbReference type="PANTHER" id="PTHR40606:SF1">
    <property type="entry name" value="UPF0339 PROTEIN YEGP"/>
    <property type="match status" value="1"/>
</dbReference>
<dbReference type="Pfam" id="PF07411">
    <property type="entry name" value="DUF1508"/>
    <property type="match status" value="2"/>
</dbReference>
<dbReference type="SUPFAM" id="SSF160113">
    <property type="entry name" value="YegP-like"/>
    <property type="match status" value="2"/>
</dbReference>
<comment type="similarity">
    <text evidence="1">Belongs to the UPF0339 family. Duplicated subfamily.</text>
</comment>
<comment type="sequence caution" evidence="1">
    <conflict type="erroneous initiation">
        <sequence resource="EMBL-CDS" id="AAM84953"/>
    </conflict>
</comment>
<comment type="sequence caution" evidence="1">
    <conflict type="erroneous initiation">
        <sequence resource="EMBL-CDS" id="AAS62909"/>
    </conflict>
</comment>
<sequence>MALGHYEIKKAKNGQYHFNLKASNGEIILSSEMYASKASAENGIASVQSNSPQESQYELKHNTKNEPYFVLKAKNHQVIGVSESYSSPTAAKNGIASVMKNGLSTVIKDLTL</sequence>
<gene>
    <name type="primary">yegP</name>
    <name type="ordered locus">YPO2854</name>
    <name type="ordered locus">y1380</name>
    <name type="ordered locus">YP_2720</name>
</gene>
<keyword id="KW-1185">Reference proteome</keyword>
<keyword id="KW-0677">Repeat</keyword>
<reference key="1">
    <citation type="journal article" date="2001" name="Nature">
        <title>Genome sequence of Yersinia pestis, the causative agent of plague.</title>
        <authorList>
            <person name="Parkhill J."/>
            <person name="Wren B.W."/>
            <person name="Thomson N.R."/>
            <person name="Titball R.W."/>
            <person name="Holden M.T.G."/>
            <person name="Prentice M.B."/>
            <person name="Sebaihia M."/>
            <person name="James K.D."/>
            <person name="Churcher C.M."/>
            <person name="Mungall K.L."/>
            <person name="Baker S."/>
            <person name="Basham D."/>
            <person name="Bentley S.D."/>
            <person name="Brooks K."/>
            <person name="Cerdeno-Tarraga A.-M."/>
            <person name="Chillingworth T."/>
            <person name="Cronin A."/>
            <person name="Davies R.M."/>
            <person name="Davis P."/>
            <person name="Dougan G."/>
            <person name="Feltwell T."/>
            <person name="Hamlin N."/>
            <person name="Holroyd S."/>
            <person name="Jagels K."/>
            <person name="Karlyshev A.V."/>
            <person name="Leather S."/>
            <person name="Moule S."/>
            <person name="Oyston P.C.F."/>
            <person name="Quail M.A."/>
            <person name="Rutherford K.M."/>
            <person name="Simmonds M."/>
            <person name="Skelton J."/>
            <person name="Stevens K."/>
            <person name="Whitehead S."/>
            <person name="Barrell B.G."/>
        </authorList>
    </citation>
    <scope>NUCLEOTIDE SEQUENCE [LARGE SCALE GENOMIC DNA]</scope>
    <source>
        <strain>CO-92 / Biovar Orientalis</strain>
    </source>
</reference>
<reference key="2">
    <citation type="journal article" date="2002" name="J. Bacteriol.">
        <title>Genome sequence of Yersinia pestis KIM.</title>
        <authorList>
            <person name="Deng W."/>
            <person name="Burland V."/>
            <person name="Plunkett G. III"/>
            <person name="Boutin A."/>
            <person name="Mayhew G.F."/>
            <person name="Liss P."/>
            <person name="Perna N.T."/>
            <person name="Rose D.J."/>
            <person name="Mau B."/>
            <person name="Zhou S."/>
            <person name="Schwartz D.C."/>
            <person name="Fetherston J.D."/>
            <person name="Lindler L.E."/>
            <person name="Brubaker R.R."/>
            <person name="Plano G.V."/>
            <person name="Straley S.C."/>
            <person name="McDonough K.A."/>
            <person name="Nilles M.L."/>
            <person name="Matson J.S."/>
            <person name="Blattner F.R."/>
            <person name="Perry R.D."/>
        </authorList>
    </citation>
    <scope>NUCLEOTIDE SEQUENCE [LARGE SCALE GENOMIC DNA]</scope>
    <source>
        <strain>KIM10+ / Biovar Mediaevalis</strain>
    </source>
</reference>
<reference key="3">
    <citation type="journal article" date="2004" name="DNA Res.">
        <title>Complete genome sequence of Yersinia pestis strain 91001, an isolate avirulent to humans.</title>
        <authorList>
            <person name="Song Y."/>
            <person name="Tong Z."/>
            <person name="Wang J."/>
            <person name="Wang L."/>
            <person name="Guo Z."/>
            <person name="Han Y."/>
            <person name="Zhang J."/>
            <person name="Pei D."/>
            <person name="Zhou D."/>
            <person name="Qin H."/>
            <person name="Pang X."/>
            <person name="Han Y."/>
            <person name="Zhai J."/>
            <person name="Li M."/>
            <person name="Cui B."/>
            <person name="Qi Z."/>
            <person name="Jin L."/>
            <person name="Dai R."/>
            <person name="Chen F."/>
            <person name="Li S."/>
            <person name="Ye C."/>
            <person name="Du Z."/>
            <person name="Lin W."/>
            <person name="Wang J."/>
            <person name="Yu J."/>
            <person name="Yang H."/>
            <person name="Wang J."/>
            <person name="Huang P."/>
            <person name="Yang R."/>
        </authorList>
    </citation>
    <scope>NUCLEOTIDE SEQUENCE [LARGE SCALE GENOMIC DNA]</scope>
    <source>
        <strain>91001 / Biovar Mediaevalis</strain>
    </source>
</reference>
<feature type="chain" id="PRO_0000218149" description="UPF0339 protein YegP">
    <location>
        <begin position="1"/>
        <end position="112"/>
    </location>
</feature>
<feature type="repeat" description="1">
    <location>
        <begin position="11"/>
        <end position="59"/>
    </location>
</feature>
<feature type="repeat" description="2">
    <location>
        <begin position="62"/>
        <end position="110"/>
    </location>
</feature>
<accession>Q8ZCV6</accession>
<accession>Q0WD48</accession>
<accession>Q74SA2</accession>
<accession>Q8D0Z0</accession>
<organism>
    <name type="scientific">Yersinia pestis</name>
    <dbReference type="NCBI Taxonomy" id="632"/>
    <lineage>
        <taxon>Bacteria</taxon>
        <taxon>Pseudomonadati</taxon>
        <taxon>Pseudomonadota</taxon>
        <taxon>Gammaproteobacteria</taxon>
        <taxon>Enterobacterales</taxon>
        <taxon>Yersiniaceae</taxon>
        <taxon>Yersinia</taxon>
    </lineage>
</organism>
<protein>
    <recommendedName>
        <fullName>UPF0339 protein YegP</fullName>
    </recommendedName>
</protein>